<protein>
    <recommendedName>
        <fullName>Ubiquitin-conjugating enzyme E2 J2</fullName>
        <ecNumber>2.3.2.23</ecNumber>
    </recommendedName>
    <alternativeName>
        <fullName>E2 ubiquitin-conjugating enzyme J2</fullName>
    </alternativeName>
    <alternativeName>
        <fullName>Non-canonical ubiquitin-conjugating enzyme 2</fullName>
        <shortName>NCUBE-2</shortName>
    </alternativeName>
</protein>
<proteinExistence type="evidence at protein level"/>
<keyword id="KW-0002">3D-structure</keyword>
<keyword id="KW-0025">Alternative splicing</keyword>
<keyword id="KW-0067">ATP-binding</keyword>
<keyword id="KW-0256">Endoplasmic reticulum</keyword>
<keyword id="KW-0472">Membrane</keyword>
<keyword id="KW-0547">Nucleotide-binding</keyword>
<keyword id="KW-1267">Proteomics identification</keyword>
<keyword id="KW-1185">Reference proteome</keyword>
<keyword id="KW-0808">Transferase</keyword>
<keyword id="KW-0812">Transmembrane</keyword>
<keyword id="KW-1133">Transmembrane helix</keyword>
<keyword id="KW-0832">Ubl conjugation</keyword>
<keyword id="KW-0833">Ubl conjugation pathway</keyword>
<keyword id="KW-0834">Unfolded protein response</keyword>
<reference key="1">
    <citation type="journal article" date="2001" name="J. Biol. Chem.">
        <title>Endoplasmic reticulum (ER)-associated degradation of T cell receptor subunits. Involvement of ER-associated ubiquitin-conjugating enzymes (E2s).</title>
        <authorList>
            <person name="Tiwari S."/>
            <person name="Weissman A.M."/>
        </authorList>
    </citation>
    <scope>NUCLEOTIDE SEQUENCE [MRNA] (ISOFORM 1)</scope>
</reference>
<reference key="2">
    <citation type="journal article" date="2004" name="Nat. Genet.">
        <title>Complete sequencing and characterization of 21,243 full-length human cDNAs.</title>
        <authorList>
            <person name="Ota T."/>
            <person name="Suzuki Y."/>
            <person name="Nishikawa T."/>
            <person name="Otsuki T."/>
            <person name="Sugiyama T."/>
            <person name="Irie R."/>
            <person name="Wakamatsu A."/>
            <person name="Hayashi K."/>
            <person name="Sato H."/>
            <person name="Nagai K."/>
            <person name="Kimura K."/>
            <person name="Makita H."/>
            <person name="Sekine M."/>
            <person name="Obayashi M."/>
            <person name="Nishi T."/>
            <person name="Shibahara T."/>
            <person name="Tanaka T."/>
            <person name="Ishii S."/>
            <person name="Yamamoto J."/>
            <person name="Saito K."/>
            <person name="Kawai Y."/>
            <person name="Isono Y."/>
            <person name="Nakamura Y."/>
            <person name="Nagahari K."/>
            <person name="Murakami K."/>
            <person name="Yasuda T."/>
            <person name="Iwayanagi T."/>
            <person name="Wagatsuma M."/>
            <person name="Shiratori A."/>
            <person name="Sudo H."/>
            <person name="Hosoiri T."/>
            <person name="Kaku Y."/>
            <person name="Kodaira H."/>
            <person name="Kondo H."/>
            <person name="Sugawara M."/>
            <person name="Takahashi M."/>
            <person name="Kanda K."/>
            <person name="Yokoi T."/>
            <person name="Furuya T."/>
            <person name="Kikkawa E."/>
            <person name="Omura Y."/>
            <person name="Abe K."/>
            <person name="Kamihara K."/>
            <person name="Katsuta N."/>
            <person name="Sato K."/>
            <person name="Tanikawa M."/>
            <person name="Yamazaki M."/>
            <person name="Ninomiya K."/>
            <person name="Ishibashi T."/>
            <person name="Yamashita H."/>
            <person name="Murakawa K."/>
            <person name="Fujimori K."/>
            <person name="Tanai H."/>
            <person name="Kimata M."/>
            <person name="Watanabe M."/>
            <person name="Hiraoka S."/>
            <person name="Chiba Y."/>
            <person name="Ishida S."/>
            <person name="Ono Y."/>
            <person name="Takiguchi S."/>
            <person name="Watanabe S."/>
            <person name="Yosida M."/>
            <person name="Hotuta T."/>
            <person name="Kusano J."/>
            <person name="Kanehori K."/>
            <person name="Takahashi-Fujii A."/>
            <person name="Hara H."/>
            <person name="Tanase T.-O."/>
            <person name="Nomura Y."/>
            <person name="Togiya S."/>
            <person name="Komai F."/>
            <person name="Hara R."/>
            <person name="Takeuchi K."/>
            <person name="Arita M."/>
            <person name="Imose N."/>
            <person name="Musashino K."/>
            <person name="Yuuki H."/>
            <person name="Oshima A."/>
            <person name="Sasaki N."/>
            <person name="Aotsuka S."/>
            <person name="Yoshikawa Y."/>
            <person name="Matsunawa H."/>
            <person name="Ichihara T."/>
            <person name="Shiohata N."/>
            <person name="Sano S."/>
            <person name="Moriya S."/>
            <person name="Momiyama H."/>
            <person name="Satoh N."/>
            <person name="Takami S."/>
            <person name="Terashima Y."/>
            <person name="Suzuki O."/>
            <person name="Nakagawa S."/>
            <person name="Senoh A."/>
            <person name="Mizoguchi H."/>
            <person name="Goto Y."/>
            <person name="Shimizu F."/>
            <person name="Wakebe H."/>
            <person name="Hishigaki H."/>
            <person name="Watanabe T."/>
            <person name="Sugiyama A."/>
            <person name="Takemoto M."/>
            <person name="Kawakami B."/>
            <person name="Yamazaki M."/>
            <person name="Watanabe K."/>
            <person name="Kumagai A."/>
            <person name="Itakura S."/>
            <person name="Fukuzumi Y."/>
            <person name="Fujimori Y."/>
            <person name="Komiyama M."/>
            <person name="Tashiro H."/>
            <person name="Tanigami A."/>
            <person name="Fujiwara T."/>
            <person name="Ono T."/>
            <person name="Yamada K."/>
            <person name="Fujii Y."/>
            <person name="Ozaki K."/>
            <person name="Hirao M."/>
            <person name="Ohmori Y."/>
            <person name="Kawabata A."/>
            <person name="Hikiji T."/>
            <person name="Kobatake N."/>
            <person name="Inagaki H."/>
            <person name="Ikema Y."/>
            <person name="Okamoto S."/>
            <person name="Okitani R."/>
            <person name="Kawakami T."/>
            <person name="Noguchi S."/>
            <person name="Itoh T."/>
            <person name="Shigeta K."/>
            <person name="Senba T."/>
            <person name="Matsumura K."/>
            <person name="Nakajima Y."/>
            <person name="Mizuno T."/>
            <person name="Morinaga M."/>
            <person name="Sasaki M."/>
            <person name="Togashi T."/>
            <person name="Oyama M."/>
            <person name="Hata H."/>
            <person name="Watanabe M."/>
            <person name="Komatsu T."/>
            <person name="Mizushima-Sugano J."/>
            <person name="Satoh T."/>
            <person name="Shirai Y."/>
            <person name="Takahashi Y."/>
            <person name="Nakagawa K."/>
            <person name="Okumura K."/>
            <person name="Nagase T."/>
            <person name="Nomura N."/>
            <person name="Kikuchi H."/>
            <person name="Masuho Y."/>
            <person name="Yamashita R."/>
            <person name="Nakai K."/>
            <person name="Yada T."/>
            <person name="Nakamura Y."/>
            <person name="Ohara O."/>
            <person name="Isogai T."/>
            <person name="Sugano S."/>
        </authorList>
    </citation>
    <scope>NUCLEOTIDE SEQUENCE [LARGE SCALE MRNA] (ISOFORMS 1 AND 2)</scope>
    <source>
        <tissue>Ovary</tissue>
    </source>
</reference>
<reference key="3">
    <citation type="journal article" date="2006" name="Nature">
        <title>The DNA sequence and biological annotation of human chromosome 1.</title>
        <authorList>
            <person name="Gregory S.G."/>
            <person name="Barlow K.F."/>
            <person name="McLay K.E."/>
            <person name="Kaul R."/>
            <person name="Swarbreck D."/>
            <person name="Dunham A."/>
            <person name="Scott C.E."/>
            <person name="Howe K.L."/>
            <person name="Woodfine K."/>
            <person name="Spencer C.C.A."/>
            <person name="Jones M.C."/>
            <person name="Gillson C."/>
            <person name="Searle S."/>
            <person name="Zhou Y."/>
            <person name="Kokocinski F."/>
            <person name="McDonald L."/>
            <person name="Evans R."/>
            <person name="Phillips K."/>
            <person name="Atkinson A."/>
            <person name="Cooper R."/>
            <person name="Jones C."/>
            <person name="Hall R.E."/>
            <person name="Andrews T.D."/>
            <person name="Lloyd C."/>
            <person name="Ainscough R."/>
            <person name="Almeida J.P."/>
            <person name="Ambrose K.D."/>
            <person name="Anderson F."/>
            <person name="Andrew R.W."/>
            <person name="Ashwell R.I.S."/>
            <person name="Aubin K."/>
            <person name="Babbage A.K."/>
            <person name="Bagguley C.L."/>
            <person name="Bailey J."/>
            <person name="Beasley H."/>
            <person name="Bethel G."/>
            <person name="Bird C.P."/>
            <person name="Bray-Allen S."/>
            <person name="Brown J.Y."/>
            <person name="Brown A.J."/>
            <person name="Buckley D."/>
            <person name="Burton J."/>
            <person name="Bye J."/>
            <person name="Carder C."/>
            <person name="Chapman J.C."/>
            <person name="Clark S.Y."/>
            <person name="Clarke G."/>
            <person name="Clee C."/>
            <person name="Cobley V."/>
            <person name="Collier R.E."/>
            <person name="Corby N."/>
            <person name="Coville G.J."/>
            <person name="Davies J."/>
            <person name="Deadman R."/>
            <person name="Dunn M."/>
            <person name="Earthrowl M."/>
            <person name="Ellington A.G."/>
            <person name="Errington H."/>
            <person name="Frankish A."/>
            <person name="Frankland J."/>
            <person name="French L."/>
            <person name="Garner P."/>
            <person name="Garnett J."/>
            <person name="Gay L."/>
            <person name="Ghori M.R.J."/>
            <person name="Gibson R."/>
            <person name="Gilby L.M."/>
            <person name="Gillett W."/>
            <person name="Glithero R.J."/>
            <person name="Grafham D.V."/>
            <person name="Griffiths C."/>
            <person name="Griffiths-Jones S."/>
            <person name="Grocock R."/>
            <person name="Hammond S."/>
            <person name="Harrison E.S.I."/>
            <person name="Hart E."/>
            <person name="Haugen E."/>
            <person name="Heath P.D."/>
            <person name="Holmes S."/>
            <person name="Holt K."/>
            <person name="Howden P.J."/>
            <person name="Hunt A.R."/>
            <person name="Hunt S.E."/>
            <person name="Hunter G."/>
            <person name="Isherwood J."/>
            <person name="James R."/>
            <person name="Johnson C."/>
            <person name="Johnson D."/>
            <person name="Joy A."/>
            <person name="Kay M."/>
            <person name="Kershaw J.K."/>
            <person name="Kibukawa M."/>
            <person name="Kimberley A.M."/>
            <person name="King A."/>
            <person name="Knights A.J."/>
            <person name="Lad H."/>
            <person name="Laird G."/>
            <person name="Lawlor S."/>
            <person name="Leongamornlert D.A."/>
            <person name="Lloyd D.M."/>
            <person name="Loveland J."/>
            <person name="Lovell J."/>
            <person name="Lush M.J."/>
            <person name="Lyne R."/>
            <person name="Martin S."/>
            <person name="Mashreghi-Mohammadi M."/>
            <person name="Matthews L."/>
            <person name="Matthews N.S.W."/>
            <person name="McLaren S."/>
            <person name="Milne S."/>
            <person name="Mistry S."/>
            <person name="Moore M.J.F."/>
            <person name="Nickerson T."/>
            <person name="O'Dell C.N."/>
            <person name="Oliver K."/>
            <person name="Palmeiri A."/>
            <person name="Palmer S.A."/>
            <person name="Parker A."/>
            <person name="Patel D."/>
            <person name="Pearce A.V."/>
            <person name="Peck A.I."/>
            <person name="Pelan S."/>
            <person name="Phelps K."/>
            <person name="Phillimore B.J."/>
            <person name="Plumb R."/>
            <person name="Rajan J."/>
            <person name="Raymond C."/>
            <person name="Rouse G."/>
            <person name="Saenphimmachak C."/>
            <person name="Sehra H.K."/>
            <person name="Sheridan E."/>
            <person name="Shownkeen R."/>
            <person name="Sims S."/>
            <person name="Skuce C.D."/>
            <person name="Smith M."/>
            <person name="Steward C."/>
            <person name="Subramanian S."/>
            <person name="Sycamore N."/>
            <person name="Tracey A."/>
            <person name="Tromans A."/>
            <person name="Van Helmond Z."/>
            <person name="Wall M."/>
            <person name="Wallis J.M."/>
            <person name="White S."/>
            <person name="Whitehead S.L."/>
            <person name="Wilkinson J.E."/>
            <person name="Willey D.L."/>
            <person name="Williams H."/>
            <person name="Wilming L."/>
            <person name="Wray P.W."/>
            <person name="Wu Z."/>
            <person name="Coulson A."/>
            <person name="Vaudin M."/>
            <person name="Sulston J.E."/>
            <person name="Durbin R.M."/>
            <person name="Hubbard T."/>
            <person name="Wooster R."/>
            <person name="Dunham I."/>
            <person name="Carter N.P."/>
            <person name="McVean G."/>
            <person name="Ross M.T."/>
            <person name="Harrow J."/>
            <person name="Olson M.V."/>
            <person name="Beck S."/>
            <person name="Rogers J."/>
            <person name="Bentley D.R."/>
        </authorList>
    </citation>
    <scope>NUCLEOTIDE SEQUENCE [LARGE SCALE GENOMIC DNA]</scope>
</reference>
<reference key="4">
    <citation type="submission" date="2005-07" db="EMBL/GenBank/DDBJ databases">
        <authorList>
            <person name="Mural R.J."/>
            <person name="Istrail S."/>
            <person name="Sutton G.G."/>
            <person name="Florea L."/>
            <person name="Halpern A.L."/>
            <person name="Mobarry C.M."/>
            <person name="Lippert R."/>
            <person name="Walenz B."/>
            <person name="Shatkay H."/>
            <person name="Dew I."/>
            <person name="Miller J.R."/>
            <person name="Flanigan M.J."/>
            <person name="Edwards N.J."/>
            <person name="Bolanos R."/>
            <person name="Fasulo D."/>
            <person name="Halldorsson B.V."/>
            <person name="Hannenhalli S."/>
            <person name="Turner R."/>
            <person name="Yooseph S."/>
            <person name="Lu F."/>
            <person name="Nusskern D.R."/>
            <person name="Shue B.C."/>
            <person name="Zheng X.H."/>
            <person name="Zhong F."/>
            <person name="Delcher A.L."/>
            <person name="Huson D.H."/>
            <person name="Kravitz S.A."/>
            <person name="Mouchard L."/>
            <person name="Reinert K."/>
            <person name="Remington K.A."/>
            <person name="Clark A.G."/>
            <person name="Waterman M.S."/>
            <person name="Eichler E.E."/>
            <person name="Adams M.D."/>
            <person name="Hunkapiller M.W."/>
            <person name="Myers E.W."/>
            <person name="Venter J.C."/>
        </authorList>
    </citation>
    <scope>NUCLEOTIDE SEQUENCE [LARGE SCALE GENOMIC DNA]</scope>
</reference>
<reference key="5">
    <citation type="journal article" date="2004" name="Genome Res.">
        <title>The status, quality, and expansion of the NIH full-length cDNA project: the Mammalian Gene Collection (MGC).</title>
        <authorList>
            <consortium name="The MGC Project Team"/>
        </authorList>
    </citation>
    <scope>NUCLEOTIDE SEQUENCE [LARGE SCALE MRNA] (ISOFORM 1)</scope>
    <scope>NUCLEOTIDE SEQUENCE [LARGE SCALE MRNA] OF 1-205 (ISOFORM 3)</scope>
    <source>
        <tissue>Brain</tissue>
        <tissue>Hippocampus</tissue>
        <tissue>Placenta</tissue>
    </source>
</reference>
<reference key="6">
    <citation type="journal article" date="2023" name="Mol. Cell">
        <title>Ring domains are essential for GATOR2-dependent mTORC1 activation.</title>
        <authorList>
            <person name="Jiang C."/>
            <person name="Dai X."/>
            <person name="He S."/>
            <person name="Zhou H."/>
            <person name="Fang L."/>
            <person name="Guo J."/>
            <person name="Liu S."/>
            <person name="Zhang T."/>
            <person name="Pan W."/>
            <person name="Yu H."/>
            <person name="Fu T."/>
            <person name="Li D."/>
            <person name="Inuzuka H."/>
            <person name="Wang P."/>
            <person name="Xiao J."/>
            <person name="Wei W."/>
        </authorList>
    </citation>
    <scope>FUNCTION</scope>
</reference>
<reference key="7">
    <citation type="submission" date="2005-11" db="PDB data bank">
        <title>Structure of the endoplasmic reticulum (ER)-associated human ubiquitin-conjugating enzyme E2 J2.</title>
        <authorList>
            <consortium name="Structural genomics consortium (SGC)"/>
        </authorList>
    </citation>
    <scope>X-RAY CRYSTALLOGRAPHY (2.0 ANGSTROMS) OF 1-185</scope>
</reference>
<reference evidence="10" key="8">
    <citation type="journal article" date="2012" name="Mol. Cell. Proteomics">
        <title>A human ubiquitin conjugating enzyme (E2)-HECT E3 ligase structure-function screen.</title>
        <authorList>
            <person name="Sheng Y."/>
            <person name="Hong J.H."/>
            <person name="Doherty R."/>
            <person name="Srikumar T."/>
            <person name="Shloush J."/>
            <person name="Avvakumov G.V."/>
            <person name="Walker J.R."/>
            <person name="Xue S."/>
            <person name="Neculai D."/>
            <person name="Wan J.W."/>
            <person name="Kim S.K."/>
            <person name="Arrowsmith C.H."/>
            <person name="Raught B."/>
            <person name="Dhe-Paganon S."/>
        </authorList>
    </citation>
    <scope>X-RAY CRYSTALLOGRAPHY (2.00 ANGSTROMS) OF 1-185</scope>
    <scope>AUTOUBIQUITINATION</scope>
</reference>
<evidence type="ECO:0000250" key="1">
    <source>
        <dbReference type="UniProtKB" id="Q6P073"/>
    </source>
</evidence>
<evidence type="ECO:0000250" key="2">
    <source>
        <dbReference type="UniProtKB" id="Q9Y385"/>
    </source>
</evidence>
<evidence type="ECO:0000255" key="3"/>
<evidence type="ECO:0000255" key="4">
    <source>
        <dbReference type="PROSITE-ProRule" id="PRU00388"/>
    </source>
</evidence>
<evidence type="ECO:0000269" key="5">
    <source>
    </source>
</evidence>
<evidence type="ECO:0000269" key="6">
    <source>
    </source>
</evidence>
<evidence type="ECO:0000303" key="7">
    <source>
    </source>
</evidence>
<evidence type="ECO:0000303" key="8">
    <source>
    </source>
</evidence>
<evidence type="ECO:0000305" key="9"/>
<evidence type="ECO:0007744" key="10">
    <source>
        <dbReference type="PDB" id="2F4W"/>
    </source>
</evidence>
<evidence type="ECO:0007829" key="11">
    <source>
        <dbReference type="PDB" id="2F4W"/>
    </source>
</evidence>
<comment type="function">
    <text evidence="1 6">Catalyzes the covalent attachment of ubiquitin to other proteins. Seems to function in the selective degradation of misfolded membrane proteins from the endoplasmic reticulum (ERAD) (By similarity). In cooperation with the GATOR2 complex, catalyzes 'Lys-6'-linked ubiquitination of NPRL2 (PubMed:36528027).</text>
</comment>
<comment type="catalytic activity">
    <reaction evidence="4">
        <text>S-ubiquitinyl-[E1 ubiquitin-activating enzyme]-L-cysteine + [E2 ubiquitin-conjugating enzyme]-L-cysteine = [E1 ubiquitin-activating enzyme]-L-cysteine + S-ubiquitinyl-[E2 ubiquitin-conjugating enzyme]-L-cysteine.</text>
        <dbReference type="EC" id="2.3.2.23"/>
    </reaction>
</comment>
<comment type="pathway">
    <text evidence="4">Protein modification; protein ubiquitination.</text>
</comment>
<comment type="interaction">
    <interactant intactId="EBI-2340110">
        <id>Q8N2K1</id>
    </interactant>
    <interactant intactId="EBI-13059134">
        <id>Q13520</id>
        <label>AQP6</label>
    </interactant>
    <organismsDiffer>false</organismsDiffer>
    <experiments>3</experiments>
</comment>
<comment type="interaction">
    <interactant intactId="EBI-2340110">
        <id>Q8N2K1</id>
    </interactant>
    <interactant intactId="EBI-10285373">
        <id>A1L3X0</id>
        <label>ELOVL7</label>
    </interactant>
    <organismsDiffer>false</organismsDiffer>
    <experiments>3</experiments>
</comment>
<comment type="interaction">
    <interactant intactId="EBI-2340110">
        <id>Q8N2K1</id>
    </interactant>
    <interactant intactId="EBI-356942">
        <id>P62879</id>
        <label>GNB2</label>
    </interactant>
    <organismsDiffer>false</organismsDiffer>
    <experiments>3</experiments>
</comment>
<comment type="interaction">
    <interactant intactId="EBI-2340110">
        <id>Q8N2K1</id>
    </interactant>
    <interactant intactId="EBI-2623483">
        <id>P09455</id>
        <label>RBP1</label>
    </interactant>
    <organismsDiffer>false</organismsDiffer>
    <experiments>3</experiments>
</comment>
<comment type="interaction">
    <interactant intactId="EBI-2340110">
        <id>Q8N2K1</id>
    </interactant>
    <interactant intactId="EBI-8638294">
        <id>Q9NUH8</id>
        <label>TMEM14B</label>
    </interactant>
    <organismsDiffer>false</organismsDiffer>
    <experiments>3</experiments>
</comment>
<comment type="interaction">
    <interactant intactId="EBI-2340110">
        <id>Q8N2K1</id>
    </interactant>
    <interactant intactId="EBI-10262539">
        <id>Q8IWR1</id>
        <label>TRIM59</label>
    </interactant>
    <organismsDiffer>false</organismsDiffer>
    <experiments>3</experiments>
</comment>
<comment type="interaction">
    <interactant intactId="EBI-2340110">
        <id>Q8N2K1</id>
    </interactant>
    <interactant intactId="EBI-720609">
        <id>O76024</id>
        <label>WFS1</label>
    </interactant>
    <organismsDiffer>false</organismsDiffer>
    <experiments>3</experiments>
</comment>
<comment type="subcellular location">
    <subcellularLocation>
        <location evidence="2">Endoplasmic reticulum membrane</location>
        <topology evidence="2">Single-pass type IV membrane protein</topology>
    </subcellularLocation>
</comment>
<comment type="alternative products">
    <event type="alternative splicing"/>
    <isoform>
        <id>Q8N2K1-1</id>
        <name>1</name>
        <sequence type="displayed"/>
    </isoform>
    <isoform>
        <id>Q8N2K1-2</id>
        <name>2</name>
        <sequence type="described" ref="VSP_011572"/>
    </isoform>
    <isoform>
        <id>Q8N2K1-3</id>
        <name>3</name>
        <sequence type="described" ref="VSP_045219"/>
    </isoform>
</comment>
<comment type="PTM">
    <text evidence="5">Auto-ubiquitinated.</text>
</comment>
<comment type="similarity">
    <text evidence="4">Belongs to the ubiquitin-conjugating enzyme family.</text>
</comment>
<comment type="sequence caution" evidence="9">
    <conflict type="frameshift">
        <sequence resource="EMBL" id="BM544827"/>
    </conflict>
</comment>
<comment type="sequence caution" evidence="9">
    <conflict type="miscellaneous discrepancy">
        <sequence resource="EMBL" id="BM544827"/>
    </conflict>
</comment>
<gene>
    <name type="primary">UBE2J2</name>
    <name type="synonym">NCUBE2</name>
</gene>
<dbReference type="EC" id="2.3.2.23"/>
<dbReference type="EMBL" id="AF296658">
    <property type="protein sequence ID" value="AAK52609.1"/>
    <property type="molecule type" value="mRNA"/>
</dbReference>
<dbReference type="EMBL" id="AK056065">
    <property type="protein sequence ID" value="BAB71086.1"/>
    <property type="molecule type" value="mRNA"/>
</dbReference>
<dbReference type="EMBL" id="AK075017">
    <property type="protein sequence ID" value="BAC11355.1"/>
    <property type="molecule type" value="mRNA"/>
</dbReference>
<dbReference type="EMBL" id="AK291935">
    <property type="protein sequence ID" value="BAF84624.1"/>
    <property type="molecule type" value="mRNA"/>
</dbReference>
<dbReference type="EMBL" id="AL162741">
    <property type="status" value="NOT_ANNOTATED_CDS"/>
    <property type="molecule type" value="Genomic_DNA"/>
</dbReference>
<dbReference type="EMBL" id="CH471183">
    <property type="protein sequence ID" value="EAW56256.1"/>
    <property type="molecule type" value="Genomic_DNA"/>
</dbReference>
<dbReference type="EMBL" id="CH471183">
    <property type="protein sequence ID" value="EAW56259.1"/>
    <property type="molecule type" value="Genomic_DNA"/>
</dbReference>
<dbReference type="EMBL" id="BC094777">
    <property type="protein sequence ID" value="AAH94777.1"/>
    <property type="molecule type" value="mRNA"/>
</dbReference>
<dbReference type="EMBL" id="BC104890">
    <property type="protein sequence ID" value="AAI04891.1"/>
    <property type="molecule type" value="mRNA"/>
</dbReference>
<dbReference type="EMBL" id="BC113430">
    <property type="protein sequence ID" value="AAI13431.1"/>
    <property type="molecule type" value="mRNA"/>
</dbReference>
<dbReference type="EMBL" id="BC143657">
    <property type="protein sequence ID" value="AAI43658.1"/>
    <property type="molecule type" value="mRNA"/>
</dbReference>
<dbReference type="EMBL" id="BM544827">
    <property type="status" value="NOT_ANNOTATED_CDS"/>
    <property type="molecule type" value="mRNA"/>
</dbReference>
<dbReference type="CCDS" id="CCDS14.1">
    <molecule id="Q8N2K1-1"/>
</dbReference>
<dbReference type="CCDS" id="CCDS15.1">
    <molecule id="Q8N2K1-3"/>
</dbReference>
<dbReference type="RefSeq" id="NP_477515.2">
    <molecule id="Q8N2K1-1"/>
    <property type="nucleotide sequence ID" value="NM_058167.2"/>
</dbReference>
<dbReference type="RefSeq" id="NP_919296.1">
    <molecule id="Q8N2K1-3"/>
    <property type="nucleotide sequence ID" value="NM_194315.2"/>
</dbReference>
<dbReference type="RefSeq" id="NP_919440.1">
    <property type="nucleotide sequence ID" value="NM_194458.1"/>
</dbReference>
<dbReference type="RefSeq" id="XP_005244775.1">
    <molecule id="Q8N2K1-1"/>
    <property type="nucleotide sequence ID" value="XM_005244718.4"/>
</dbReference>
<dbReference type="RefSeq" id="XP_005244776.1">
    <molecule id="Q8N2K1-1"/>
    <property type="nucleotide sequence ID" value="XM_005244719.5"/>
</dbReference>
<dbReference type="RefSeq" id="XP_006710396.1">
    <molecule id="Q8N2K1-1"/>
    <property type="nucleotide sequence ID" value="XM_006710333.4"/>
</dbReference>
<dbReference type="RefSeq" id="XP_011538915.1">
    <molecule id="Q8N2K1-2"/>
    <property type="nucleotide sequence ID" value="XM_011540613.4"/>
</dbReference>
<dbReference type="RefSeq" id="XP_011538916.1">
    <molecule id="Q8N2K1-1"/>
    <property type="nucleotide sequence ID" value="XM_011540614.3"/>
</dbReference>
<dbReference type="RefSeq" id="XP_054190186.1">
    <molecule id="Q8N2K1-1"/>
    <property type="nucleotide sequence ID" value="XM_054334211.1"/>
</dbReference>
<dbReference type="RefSeq" id="XP_054190187.1">
    <molecule id="Q8N2K1-1"/>
    <property type="nucleotide sequence ID" value="XM_054334212.1"/>
</dbReference>
<dbReference type="RefSeq" id="XP_054190188.1">
    <molecule id="Q8N2K1-1"/>
    <property type="nucleotide sequence ID" value="XM_054334213.1"/>
</dbReference>
<dbReference type="RefSeq" id="XP_054190189.1">
    <molecule id="Q8N2K1-1"/>
    <property type="nucleotide sequence ID" value="XM_054334214.1"/>
</dbReference>
<dbReference type="RefSeq" id="XP_054190190.1">
    <molecule id="Q8N2K1-2"/>
    <property type="nucleotide sequence ID" value="XM_054334215.1"/>
</dbReference>
<dbReference type="PDB" id="2F4W">
    <property type="method" value="X-ray"/>
    <property type="resolution" value="2.00 A"/>
    <property type="chains" value="A/B=1-185"/>
</dbReference>
<dbReference type="PDBsum" id="2F4W"/>
<dbReference type="SMR" id="Q8N2K1"/>
<dbReference type="BioGRID" id="125598">
    <property type="interactions" value="41"/>
</dbReference>
<dbReference type="FunCoup" id="Q8N2K1">
    <property type="interactions" value="3587"/>
</dbReference>
<dbReference type="IntAct" id="Q8N2K1">
    <property type="interactions" value="21"/>
</dbReference>
<dbReference type="STRING" id="9606.ENSP00000383719"/>
<dbReference type="GlyGen" id="Q8N2K1">
    <property type="glycosylation" value="1 site, 1 O-linked glycan (1 site)"/>
</dbReference>
<dbReference type="iPTMnet" id="Q8N2K1"/>
<dbReference type="PhosphoSitePlus" id="Q8N2K1"/>
<dbReference type="SwissPalm" id="Q8N2K1"/>
<dbReference type="BioMuta" id="UBE2J2"/>
<dbReference type="DMDM" id="251757431"/>
<dbReference type="jPOST" id="Q8N2K1"/>
<dbReference type="MassIVE" id="Q8N2K1"/>
<dbReference type="PaxDb" id="9606-ENSP00000383719"/>
<dbReference type="PeptideAtlas" id="Q8N2K1"/>
<dbReference type="ProteomicsDB" id="2392"/>
<dbReference type="ProteomicsDB" id="71714">
    <molecule id="Q8N2K1-1"/>
</dbReference>
<dbReference type="ProteomicsDB" id="71715">
    <molecule id="Q8N2K1-2"/>
</dbReference>
<dbReference type="Pumba" id="Q8N2K1"/>
<dbReference type="Antibodypedia" id="26182">
    <property type="antibodies" value="138 antibodies from 25 providers"/>
</dbReference>
<dbReference type="DNASU" id="118424"/>
<dbReference type="Ensembl" id="ENST00000349431.11">
    <molecule id="Q8N2K1-1"/>
    <property type="protein sequence ID" value="ENSP00000305826.7"/>
    <property type="gene ID" value="ENSG00000160087.21"/>
</dbReference>
<dbReference type="Ensembl" id="ENST00000360466.6">
    <molecule id="Q8N2K1-1"/>
    <property type="protein sequence ID" value="ENSP00000353653.2"/>
    <property type="gene ID" value="ENSG00000160087.21"/>
</dbReference>
<dbReference type="Ensembl" id="ENST00000400930.8">
    <molecule id="Q8N2K1-3"/>
    <property type="protein sequence ID" value="ENSP00000383719.4"/>
    <property type="gene ID" value="ENSG00000160087.21"/>
</dbReference>
<dbReference type="GeneID" id="118424"/>
<dbReference type="KEGG" id="hsa:118424"/>
<dbReference type="MANE-Select" id="ENST00000349431.11">
    <property type="protein sequence ID" value="ENSP00000305826.7"/>
    <property type="RefSeq nucleotide sequence ID" value="NM_058167.3"/>
    <property type="RefSeq protein sequence ID" value="NP_477515.2"/>
</dbReference>
<dbReference type="UCSC" id="uc001ado.4">
    <molecule id="Q8N2K1-1"/>
    <property type="organism name" value="human"/>
</dbReference>
<dbReference type="AGR" id="HGNC:19268"/>
<dbReference type="CTD" id="118424"/>
<dbReference type="GeneCards" id="UBE2J2"/>
<dbReference type="HGNC" id="HGNC:19268">
    <property type="gene designation" value="UBE2J2"/>
</dbReference>
<dbReference type="HPA" id="ENSG00000160087">
    <property type="expression patterns" value="Low tissue specificity"/>
</dbReference>
<dbReference type="MIM" id="619756">
    <property type="type" value="gene"/>
</dbReference>
<dbReference type="neXtProt" id="NX_Q8N2K1"/>
<dbReference type="PharmGKB" id="PA134882268"/>
<dbReference type="VEuPathDB" id="HostDB:ENSG00000160087"/>
<dbReference type="eggNOG" id="KOG0894">
    <property type="taxonomic scope" value="Eukaryota"/>
</dbReference>
<dbReference type="GeneTree" id="ENSGT00940000156173"/>
<dbReference type="HOGENOM" id="CLU_041481_1_2_1"/>
<dbReference type="InParanoid" id="Q8N2K1"/>
<dbReference type="OMA" id="GWSVATI"/>
<dbReference type="OrthoDB" id="1158011at2759"/>
<dbReference type="PAN-GO" id="Q8N2K1">
    <property type="GO annotations" value="5 GO annotations based on evolutionary models"/>
</dbReference>
<dbReference type="PhylomeDB" id="Q8N2K1"/>
<dbReference type="TreeFam" id="TF101123"/>
<dbReference type="BRENDA" id="2.3.2.23">
    <property type="organism ID" value="2681"/>
</dbReference>
<dbReference type="PathwayCommons" id="Q8N2K1"/>
<dbReference type="Reactome" id="R-HSA-8866654">
    <molecule id="Q8N2K1-1"/>
    <property type="pathway name" value="E3 ubiquitin ligases ubiquitinate target proteins"/>
</dbReference>
<dbReference type="Reactome" id="R-HSA-9609523">
    <molecule id="Q8N2K1-1"/>
    <property type="pathway name" value="Insertion of tail-anchored proteins into the endoplasmic reticulum membrane"/>
</dbReference>
<dbReference type="Reactome" id="R-HSA-983168">
    <property type="pathway name" value="Antigen processing: Ubiquitination &amp; Proteasome degradation"/>
</dbReference>
<dbReference type="SignaLink" id="Q8N2K1"/>
<dbReference type="SIGNOR" id="Q8N2K1"/>
<dbReference type="UniPathway" id="UPA00143"/>
<dbReference type="BioGRID-ORCS" id="118424">
    <property type="hits" value="112 hits in 1164 CRISPR screens"/>
</dbReference>
<dbReference type="ChiTaRS" id="UBE2J2">
    <property type="organism name" value="human"/>
</dbReference>
<dbReference type="EvolutionaryTrace" id="Q8N2K1"/>
<dbReference type="GenomeRNAi" id="118424"/>
<dbReference type="Pharos" id="Q8N2K1">
    <property type="development level" value="Tbio"/>
</dbReference>
<dbReference type="PRO" id="PR:Q8N2K1"/>
<dbReference type="Proteomes" id="UP000005640">
    <property type="component" value="Chromosome 1"/>
</dbReference>
<dbReference type="RNAct" id="Q8N2K1">
    <property type="molecule type" value="protein"/>
</dbReference>
<dbReference type="Bgee" id="ENSG00000160087">
    <property type="expression patterns" value="Expressed in left testis and 183 other cell types or tissues"/>
</dbReference>
<dbReference type="ExpressionAtlas" id="Q8N2K1">
    <property type="expression patterns" value="baseline and differential"/>
</dbReference>
<dbReference type="GO" id="GO:0005829">
    <property type="term" value="C:cytosol"/>
    <property type="evidence" value="ECO:0000304"/>
    <property type="project" value="Reactome"/>
</dbReference>
<dbReference type="GO" id="GO:0005783">
    <property type="term" value="C:endoplasmic reticulum"/>
    <property type="evidence" value="ECO:0000318"/>
    <property type="project" value="GO_Central"/>
</dbReference>
<dbReference type="GO" id="GO:0005789">
    <property type="term" value="C:endoplasmic reticulum membrane"/>
    <property type="evidence" value="ECO:0000304"/>
    <property type="project" value="Reactome"/>
</dbReference>
<dbReference type="GO" id="GO:0005634">
    <property type="term" value="C:nucleus"/>
    <property type="evidence" value="ECO:0000318"/>
    <property type="project" value="GO_Central"/>
</dbReference>
<dbReference type="GO" id="GO:0000151">
    <property type="term" value="C:ubiquitin ligase complex"/>
    <property type="evidence" value="ECO:0000353"/>
    <property type="project" value="ParkinsonsUK-UCL"/>
</dbReference>
<dbReference type="GO" id="GO:0005524">
    <property type="term" value="F:ATP binding"/>
    <property type="evidence" value="ECO:0007669"/>
    <property type="project" value="UniProtKB-KW"/>
</dbReference>
<dbReference type="GO" id="GO:0061631">
    <property type="term" value="F:ubiquitin conjugating enzyme activity"/>
    <property type="evidence" value="ECO:0000314"/>
    <property type="project" value="UniProtKB"/>
</dbReference>
<dbReference type="GO" id="GO:0031625">
    <property type="term" value="F:ubiquitin protein ligase binding"/>
    <property type="evidence" value="ECO:0000353"/>
    <property type="project" value="ParkinsonsUK-UCL"/>
</dbReference>
<dbReference type="GO" id="GO:0036503">
    <property type="term" value="P:ERAD pathway"/>
    <property type="evidence" value="ECO:0000315"/>
    <property type="project" value="ParkinsonsUK-UCL"/>
</dbReference>
<dbReference type="GO" id="GO:1903955">
    <property type="term" value="P:positive regulation of protein targeting to mitochondrion"/>
    <property type="evidence" value="ECO:0007001"/>
    <property type="project" value="ParkinsonsUK-UCL"/>
</dbReference>
<dbReference type="GO" id="GO:0085020">
    <property type="term" value="P:protein K6-linked ubiquitination"/>
    <property type="evidence" value="ECO:0000314"/>
    <property type="project" value="UniProtKB"/>
</dbReference>
<dbReference type="GO" id="GO:0000209">
    <property type="term" value="P:protein polyubiquitination"/>
    <property type="evidence" value="ECO:0000318"/>
    <property type="project" value="GO_Central"/>
</dbReference>
<dbReference type="GO" id="GO:0006986">
    <property type="term" value="P:response to unfolded protein"/>
    <property type="evidence" value="ECO:0007669"/>
    <property type="project" value="UniProtKB-KW"/>
</dbReference>
<dbReference type="GO" id="GO:0006511">
    <property type="term" value="P:ubiquitin-dependent protein catabolic process"/>
    <property type="evidence" value="ECO:0000315"/>
    <property type="project" value="ParkinsonsUK-UCL"/>
</dbReference>
<dbReference type="CDD" id="cd23799">
    <property type="entry name" value="UBCc_UBE2J"/>
    <property type="match status" value="1"/>
</dbReference>
<dbReference type="FunFam" id="3.10.110.10:FF:000023">
    <property type="entry name" value="Ubiquitin-conjugating enzyme E2 J2"/>
    <property type="match status" value="1"/>
</dbReference>
<dbReference type="Gene3D" id="3.10.110.10">
    <property type="entry name" value="Ubiquitin Conjugating Enzyme"/>
    <property type="match status" value="1"/>
</dbReference>
<dbReference type="InterPro" id="IPR050113">
    <property type="entry name" value="Ub_conjugating_enzyme"/>
</dbReference>
<dbReference type="InterPro" id="IPR000608">
    <property type="entry name" value="UBQ-conjugat_E2_core"/>
</dbReference>
<dbReference type="InterPro" id="IPR016135">
    <property type="entry name" value="UBQ-conjugating_enzyme/RWD"/>
</dbReference>
<dbReference type="PANTHER" id="PTHR24067">
    <property type="entry name" value="UBIQUITIN-CONJUGATING ENZYME E2"/>
    <property type="match status" value="1"/>
</dbReference>
<dbReference type="Pfam" id="PF00179">
    <property type="entry name" value="UQ_con"/>
    <property type="match status" value="1"/>
</dbReference>
<dbReference type="SMART" id="SM00212">
    <property type="entry name" value="UBCc"/>
    <property type="match status" value="1"/>
</dbReference>
<dbReference type="SUPFAM" id="SSF54495">
    <property type="entry name" value="UBC-like"/>
    <property type="match status" value="1"/>
</dbReference>
<dbReference type="PROSITE" id="PS50127">
    <property type="entry name" value="UBC_2"/>
    <property type="match status" value="1"/>
</dbReference>
<accession>Q8N2K1</accession>
<accession>A8MYC7</accession>
<accession>Q504T9</accession>
<accession>Q96N26</accession>
<accession>Q96T84</accession>
<sequence>MSSTSSKRAPTTATQRLKQDYLRIKKDPVPYICAEPLPSNILEWHYVVRGPEMTPYEGGYYHGKLIFPREFPFKPPSIYMITPNGRFKCNTRLCLSITDFHPDTWNPAWSVSTILTGLLSFMVEKGPTLGSIETSDFTKRQLAVQSLAFNLKDKVFCELFPEVVEEIKQKQKAQDELSSRPQTLPLPDVVPDGETHLVQNGIQLLNGHAPGAVPNLAGLQQANRHHGLLGGALANLFVIVGFAAFAYTVKYVLRSIAQE</sequence>
<feature type="chain" id="PRO_0000082596" description="Ubiquitin-conjugating enzyme E2 J2">
    <location>
        <begin position="1"/>
        <end position="259"/>
    </location>
</feature>
<feature type="topological domain" description="Cytoplasmic" evidence="3">
    <location>
        <begin position="1"/>
        <end position="226"/>
    </location>
</feature>
<feature type="transmembrane region" description="Helical; Anchor for type IV membrane protein" evidence="3">
    <location>
        <begin position="227"/>
        <end position="247"/>
    </location>
</feature>
<feature type="topological domain" description="Lumenal" evidence="3">
    <location>
        <begin position="248"/>
        <end position="259"/>
    </location>
</feature>
<feature type="domain" description="UBC core" evidence="4">
    <location>
        <begin position="12"/>
        <end position="162"/>
    </location>
</feature>
<feature type="active site" description="Glycyl thioester intermediate" evidence="4">
    <location>
        <position position="94"/>
    </location>
</feature>
<feature type="splice variant" id="VSP_011572" description="In isoform 2." evidence="7">
    <original>MSSTSSKRAPTTATQRLKQDYLRIKKDPVPYICAEPLPSNILEW</original>
    <variation>MWPQDIAGR</variation>
    <location>
        <begin position="1"/>
        <end position="44"/>
    </location>
</feature>
<feature type="splice variant" id="VSP_045219" description="In isoform 3." evidence="8">
    <original>W</original>
    <variation>WFKRFSWLSLLSSWDYR</variation>
    <location>
        <position position="44"/>
    </location>
</feature>
<feature type="sequence conflict" description="In Ref. 2; BAC11355." evidence="9" ref="2">
    <original>S</original>
    <variation>N</variation>
    <location>
        <position position="2"/>
    </location>
</feature>
<feature type="sequence conflict" description="In Ref. 2; BAC11355." evidence="9" ref="2">
    <original>F</original>
    <variation>S</variation>
    <location>
        <position position="100"/>
    </location>
</feature>
<feature type="sequence conflict" description="In Ref. 1; AAK52609." evidence="9" ref="1">
    <original>PNLAGLQQANRHHGLLGGALANLFV</original>
    <variation>QTSQGSSRPTGTTDSGWRPGELVC</variation>
    <location>
        <begin position="214"/>
        <end position="238"/>
    </location>
</feature>
<feature type="helix" evidence="11">
    <location>
        <begin position="13"/>
        <end position="26"/>
    </location>
</feature>
<feature type="strand" evidence="11">
    <location>
        <begin position="32"/>
        <end position="37"/>
    </location>
</feature>
<feature type="strand" evidence="11">
    <location>
        <begin position="40"/>
        <end position="49"/>
    </location>
</feature>
<feature type="turn" evidence="11">
    <location>
        <begin position="55"/>
        <end position="58"/>
    </location>
</feature>
<feature type="strand" evidence="11">
    <location>
        <begin position="60"/>
        <end position="66"/>
    </location>
</feature>
<feature type="turn" evidence="11">
    <location>
        <begin position="69"/>
        <end position="72"/>
    </location>
</feature>
<feature type="strand" evidence="11">
    <location>
        <begin position="77"/>
        <end position="80"/>
    </location>
</feature>
<feature type="strand" evidence="11">
    <location>
        <begin position="85"/>
        <end position="87"/>
    </location>
</feature>
<feature type="helix" evidence="11">
    <location>
        <begin position="111"/>
        <end position="123"/>
    </location>
</feature>
<feature type="helix" evidence="11">
    <location>
        <begin position="136"/>
        <end position="151"/>
    </location>
</feature>
<feature type="helix" evidence="11">
    <location>
        <begin position="154"/>
        <end position="159"/>
    </location>
</feature>
<feature type="helix" evidence="11">
    <location>
        <begin position="161"/>
        <end position="167"/>
    </location>
</feature>
<organism>
    <name type="scientific">Homo sapiens</name>
    <name type="common">Human</name>
    <dbReference type="NCBI Taxonomy" id="9606"/>
    <lineage>
        <taxon>Eukaryota</taxon>
        <taxon>Metazoa</taxon>
        <taxon>Chordata</taxon>
        <taxon>Craniata</taxon>
        <taxon>Vertebrata</taxon>
        <taxon>Euteleostomi</taxon>
        <taxon>Mammalia</taxon>
        <taxon>Eutheria</taxon>
        <taxon>Euarchontoglires</taxon>
        <taxon>Primates</taxon>
        <taxon>Haplorrhini</taxon>
        <taxon>Catarrhini</taxon>
        <taxon>Hominidae</taxon>
        <taxon>Homo</taxon>
    </lineage>
</organism>
<name>UB2J2_HUMAN</name>